<organism>
    <name type="scientific">Dictyostelium discoideum</name>
    <name type="common">Social amoeba</name>
    <dbReference type="NCBI Taxonomy" id="44689"/>
    <lineage>
        <taxon>Eukaryota</taxon>
        <taxon>Amoebozoa</taxon>
        <taxon>Evosea</taxon>
        <taxon>Eumycetozoa</taxon>
        <taxon>Dictyostelia</taxon>
        <taxon>Dictyosteliales</taxon>
        <taxon>Dictyosteliaceae</taxon>
        <taxon>Dictyostelium</taxon>
    </lineage>
</organism>
<feature type="chain" id="PRO_0000328417" description="Protein arginine N-methyltransferase 1">
    <location>
        <begin position="1"/>
        <end position="341"/>
    </location>
</feature>
<feature type="domain" description="SAM-dependent MTase PRMT-type" evidence="4">
    <location>
        <begin position="20"/>
        <end position="315"/>
    </location>
</feature>
<feature type="active site" evidence="2">
    <location>
        <position position="132"/>
    </location>
</feature>
<feature type="active site" evidence="2">
    <location>
        <position position="141"/>
    </location>
</feature>
<feature type="binding site" evidence="2">
    <location>
        <position position="33"/>
    </location>
    <ligand>
        <name>S-adenosyl-L-methionine</name>
        <dbReference type="ChEBI" id="CHEBI:59789"/>
    </ligand>
</feature>
<feature type="binding site" evidence="2">
    <location>
        <position position="42"/>
    </location>
    <ligand>
        <name>S-adenosyl-L-methionine</name>
        <dbReference type="ChEBI" id="CHEBI:59789"/>
    </ligand>
</feature>
<feature type="binding site" evidence="2">
    <location>
        <position position="66"/>
    </location>
    <ligand>
        <name>S-adenosyl-L-methionine</name>
        <dbReference type="ChEBI" id="CHEBI:59789"/>
    </ligand>
</feature>
<feature type="binding site" evidence="2">
    <location>
        <position position="88"/>
    </location>
    <ligand>
        <name>S-adenosyl-L-methionine</name>
        <dbReference type="ChEBI" id="CHEBI:59789"/>
    </ligand>
</feature>
<feature type="binding site" evidence="2">
    <location>
        <position position="117"/>
    </location>
    <ligand>
        <name>S-adenosyl-L-methionine</name>
        <dbReference type="ChEBI" id="CHEBI:59789"/>
    </ligand>
</feature>
<reference key="1">
    <citation type="journal article" date="2005" name="Nature">
        <title>The genome of the social amoeba Dictyostelium discoideum.</title>
        <authorList>
            <person name="Eichinger L."/>
            <person name="Pachebat J.A."/>
            <person name="Gloeckner G."/>
            <person name="Rajandream M.A."/>
            <person name="Sucgang R."/>
            <person name="Berriman M."/>
            <person name="Song J."/>
            <person name="Olsen R."/>
            <person name="Szafranski K."/>
            <person name="Xu Q."/>
            <person name="Tunggal B."/>
            <person name="Kummerfeld S."/>
            <person name="Madera M."/>
            <person name="Konfortov B.A."/>
            <person name="Rivero F."/>
            <person name="Bankier A.T."/>
            <person name="Lehmann R."/>
            <person name="Hamlin N."/>
            <person name="Davies R."/>
            <person name="Gaudet P."/>
            <person name="Fey P."/>
            <person name="Pilcher K."/>
            <person name="Chen G."/>
            <person name="Saunders D."/>
            <person name="Sodergren E.J."/>
            <person name="Davis P."/>
            <person name="Kerhornou A."/>
            <person name="Nie X."/>
            <person name="Hall N."/>
            <person name="Anjard C."/>
            <person name="Hemphill L."/>
            <person name="Bason N."/>
            <person name="Farbrother P."/>
            <person name="Desany B."/>
            <person name="Just E."/>
            <person name="Morio T."/>
            <person name="Rost R."/>
            <person name="Churcher C.M."/>
            <person name="Cooper J."/>
            <person name="Haydock S."/>
            <person name="van Driessche N."/>
            <person name="Cronin A."/>
            <person name="Goodhead I."/>
            <person name="Muzny D.M."/>
            <person name="Mourier T."/>
            <person name="Pain A."/>
            <person name="Lu M."/>
            <person name="Harper D."/>
            <person name="Lindsay R."/>
            <person name="Hauser H."/>
            <person name="James K.D."/>
            <person name="Quiles M."/>
            <person name="Madan Babu M."/>
            <person name="Saito T."/>
            <person name="Buchrieser C."/>
            <person name="Wardroper A."/>
            <person name="Felder M."/>
            <person name="Thangavelu M."/>
            <person name="Johnson D."/>
            <person name="Knights A."/>
            <person name="Loulseged H."/>
            <person name="Mungall K.L."/>
            <person name="Oliver K."/>
            <person name="Price C."/>
            <person name="Quail M.A."/>
            <person name="Urushihara H."/>
            <person name="Hernandez J."/>
            <person name="Rabbinowitsch E."/>
            <person name="Steffen D."/>
            <person name="Sanders M."/>
            <person name="Ma J."/>
            <person name="Kohara Y."/>
            <person name="Sharp S."/>
            <person name="Simmonds M.N."/>
            <person name="Spiegler S."/>
            <person name="Tivey A."/>
            <person name="Sugano S."/>
            <person name="White B."/>
            <person name="Walker D."/>
            <person name="Woodward J.R."/>
            <person name="Winckler T."/>
            <person name="Tanaka Y."/>
            <person name="Shaulsky G."/>
            <person name="Schleicher M."/>
            <person name="Weinstock G.M."/>
            <person name="Rosenthal A."/>
            <person name="Cox E.C."/>
            <person name="Chisholm R.L."/>
            <person name="Gibbs R.A."/>
            <person name="Loomis W.F."/>
            <person name="Platzer M."/>
            <person name="Kay R.R."/>
            <person name="Williams J.G."/>
            <person name="Dear P.H."/>
            <person name="Noegel A.A."/>
            <person name="Barrell B.G."/>
            <person name="Kuspa A."/>
        </authorList>
    </citation>
    <scope>NUCLEOTIDE SEQUENCE [LARGE SCALE GENOMIC DNA]</scope>
    <source>
        <strain>AX4</strain>
    </source>
</reference>
<evidence type="ECO:0000250" key="1"/>
<evidence type="ECO:0000250" key="2">
    <source>
        <dbReference type="UniProtKB" id="Q63009"/>
    </source>
</evidence>
<evidence type="ECO:0000250" key="3">
    <source>
        <dbReference type="UniProtKB" id="Q99873"/>
    </source>
</evidence>
<evidence type="ECO:0000255" key="4">
    <source>
        <dbReference type="PROSITE-ProRule" id="PRU01015"/>
    </source>
</evidence>
<dbReference type="EC" id="2.1.1.319" evidence="3"/>
<dbReference type="EMBL" id="AAFI02000177">
    <property type="protein sequence ID" value="EAL61762.1"/>
    <property type="molecule type" value="Genomic_DNA"/>
</dbReference>
<dbReference type="RefSeq" id="XP_635288.1">
    <property type="nucleotide sequence ID" value="XM_630196.1"/>
</dbReference>
<dbReference type="SMR" id="Q54EF2"/>
<dbReference type="FunCoup" id="Q54EF2">
    <property type="interactions" value="1116"/>
</dbReference>
<dbReference type="STRING" id="44689.Q54EF2"/>
<dbReference type="PaxDb" id="44689-DDB0235399"/>
<dbReference type="EnsemblProtists" id="EAL61762">
    <property type="protein sequence ID" value="EAL61762"/>
    <property type="gene ID" value="DDB_G0291556"/>
</dbReference>
<dbReference type="GeneID" id="8628232"/>
<dbReference type="KEGG" id="ddi:DDB_G0291556"/>
<dbReference type="dictyBase" id="DDB_G0291556">
    <property type="gene designation" value="prmt1"/>
</dbReference>
<dbReference type="VEuPathDB" id="AmoebaDB:DDB_G0291556"/>
<dbReference type="eggNOG" id="KOG1499">
    <property type="taxonomic scope" value="Eukaryota"/>
</dbReference>
<dbReference type="HOGENOM" id="CLU_017375_1_2_1"/>
<dbReference type="InParanoid" id="Q54EF2"/>
<dbReference type="OMA" id="CTHTKVK"/>
<dbReference type="PhylomeDB" id="Q54EF2"/>
<dbReference type="Reactome" id="R-DDI-3214858">
    <property type="pathway name" value="RMTs methylate histone arginines"/>
</dbReference>
<dbReference type="Reactome" id="R-DDI-8876725">
    <property type="pathway name" value="Protein methylation"/>
</dbReference>
<dbReference type="Reactome" id="R-DDI-9018519">
    <property type="pathway name" value="Estrogen-dependent gene expression"/>
</dbReference>
<dbReference type="PRO" id="PR:Q54EF2"/>
<dbReference type="Proteomes" id="UP000002195">
    <property type="component" value="Chromosome 6"/>
</dbReference>
<dbReference type="GO" id="GO:0005737">
    <property type="term" value="C:cytoplasm"/>
    <property type="evidence" value="ECO:0000250"/>
    <property type="project" value="UniProtKB"/>
</dbReference>
<dbReference type="GO" id="GO:0005829">
    <property type="term" value="C:cytosol"/>
    <property type="evidence" value="ECO:0007669"/>
    <property type="project" value="UniProtKB-SubCell"/>
</dbReference>
<dbReference type="GO" id="GO:0005634">
    <property type="term" value="C:nucleus"/>
    <property type="evidence" value="ECO:0000318"/>
    <property type="project" value="GO_Central"/>
</dbReference>
<dbReference type="GO" id="GO:0042054">
    <property type="term" value="F:histone methyltransferase activity"/>
    <property type="evidence" value="ECO:0000250"/>
    <property type="project" value="UniProtKB"/>
</dbReference>
<dbReference type="GO" id="GO:0042802">
    <property type="term" value="F:identical protein binding"/>
    <property type="evidence" value="ECO:0000250"/>
    <property type="project" value="UniProtKB"/>
</dbReference>
<dbReference type="GO" id="GO:0008170">
    <property type="term" value="F:N-methyltransferase activity"/>
    <property type="evidence" value="ECO:0000250"/>
    <property type="project" value="UniProtKB"/>
</dbReference>
<dbReference type="GO" id="GO:0016274">
    <property type="term" value="F:protein-arginine N-methyltransferase activity"/>
    <property type="evidence" value="ECO:0000250"/>
    <property type="project" value="dictyBase"/>
</dbReference>
<dbReference type="GO" id="GO:0035242">
    <property type="term" value="F:protein-arginine omega-N asymmetric methyltransferase activity"/>
    <property type="evidence" value="ECO:0007669"/>
    <property type="project" value="UniProtKB-EC"/>
</dbReference>
<dbReference type="GO" id="GO:0035241">
    <property type="term" value="F:protein-arginine omega-N monomethyltransferase activity"/>
    <property type="evidence" value="ECO:0007669"/>
    <property type="project" value="RHEA"/>
</dbReference>
<dbReference type="GO" id="GO:1904047">
    <property type="term" value="F:S-adenosyl-L-methionine binding"/>
    <property type="evidence" value="ECO:0000250"/>
    <property type="project" value="UniProtKB"/>
</dbReference>
<dbReference type="GO" id="GO:0006338">
    <property type="term" value="P:chromatin remodeling"/>
    <property type="evidence" value="ECO:0000318"/>
    <property type="project" value="GO_Central"/>
</dbReference>
<dbReference type="GO" id="GO:0006406">
    <property type="term" value="P:mRNA export from nucleus"/>
    <property type="evidence" value="ECO:0000250"/>
    <property type="project" value="dictyBase"/>
</dbReference>
<dbReference type="GO" id="GO:0045653">
    <property type="term" value="P:negative regulation of megakaryocyte differentiation"/>
    <property type="evidence" value="ECO:0000250"/>
    <property type="project" value="UniProtKB"/>
</dbReference>
<dbReference type="GO" id="GO:0018195">
    <property type="term" value="P:peptidyl-arginine modification"/>
    <property type="evidence" value="ECO:0000250"/>
    <property type="project" value="dictyBase"/>
</dbReference>
<dbReference type="GO" id="GO:0006479">
    <property type="term" value="P:protein methylation"/>
    <property type="evidence" value="ECO:0000250"/>
    <property type="project" value="UniProtKB"/>
</dbReference>
<dbReference type="GO" id="GO:0006355">
    <property type="term" value="P:regulation of DNA-templated transcription"/>
    <property type="evidence" value="ECO:0000318"/>
    <property type="project" value="GO_Central"/>
</dbReference>
<dbReference type="CDD" id="cd02440">
    <property type="entry name" value="AdoMet_MTases"/>
    <property type="match status" value="1"/>
</dbReference>
<dbReference type="FunFam" id="2.70.160.11:FF:000001">
    <property type="entry name" value="Blast:Protein arginine N-methyltransferase 1"/>
    <property type="match status" value="1"/>
</dbReference>
<dbReference type="FunFam" id="3.40.50.150:FF:000003">
    <property type="entry name" value="Blast:Protein arginine N-methyltransferase 1"/>
    <property type="match status" value="1"/>
</dbReference>
<dbReference type="Gene3D" id="2.70.160.11">
    <property type="entry name" value="Hnrnp arginine n-methyltransferase1"/>
    <property type="match status" value="1"/>
</dbReference>
<dbReference type="Gene3D" id="3.40.50.150">
    <property type="entry name" value="Vaccinia Virus protein VP39"/>
    <property type="match status" value="1"/>
</dbReference>
<dbReference type="InterPro" id="IPR025799">
    <property type="entry name" value="Arg_MeTrfase"/>
</dbReference>
<dbReference type="InterPro" id="IPR041698">
    <property type="entry name" value="Methyltransf_25"/>
</dbReference>
<dbReference type="InterPro" id="IPR055135">
    <property type="entry name" value="PRMT_dom"/>
</dbReference>
<dbReference type="InterPro" id="IPR029063">
    <property type="entry name" value="SAM-dependent_MTases_sf"/>
</dbReference>
<dbReference type="PANTHER" id="PTHR11006">
    <property type="entry name" value="PROTEIN ARGININE N-METHYLTRANSFERASE"/>
    <property type="match status" value="1"/>
</dbReference>
<dbReference type="PANTHER" id="PTHR11006:SF53">
    <property type="entry name" value="PROTEIN ARGININE N-METHYLTRANSFERASE 3"/>
    <property type="match status" value="1"/>
</dbReference>
<dbReference type="Pfam" id="PF13649">
    <property type="entry name" value="Methyltransf_25"/>
    <property type="match status" value="1"/>
</dbReference>
<dbReference type="Pfam" id="PF22528">
    <property type="entry name" value="PRMT_C"/>
    <property type="match status" value="1"/>
</dbReference>
<dbReference type="SUPFAM" id="SSF53335">
    <property type="entry name" value="S-adenosyl-L-methionine-dependent methyltransferases"/>
    <property type="match status" value="1"/>
</dbReference>
<dbReference type="PROSITE" id="PS51678">
    <property type="entry name" value="SAM_MT_PRMT"/>
    <property type="match status" value="1"/>
</dbReference>
<keyword id="KW-0963">Cytoplasm</keyword>
<keyword id="KW-0489">Methyltransferase</keyword>
<keyword id="KW-0539">Nucleus</keyword>
<keyword id="KW-1185">Reference proteome</keyword>
<keyword id="KW-0949">S-adenosyl-L-methionine</keyword>
<keyword id="KW-0808">Transferase</keyword>
<name>ANM1_DICDI</name>
<proteinExistence type="inferred from homology"/>
<sequence>MTETNKNVDALEKINQMSSADYYFDSYSHFGIHEEMLKDEVRTLAYRRAIINNRKLFEGKVVLDVGCGTGILCMFAAQAGAKMVIGVDNSEMLPIAQKIITANNFDKTITLIKGKMEEVVLPVDKVDIIISEWMGYFMLYEGMLDTVLYARDKYLVPGGVILPDKASLYITAIEDQDYKEEKINYWNNVYGFDMSCIREIALKEPLVDVVQPNMIVTNDCCILTVDIMTITKDELKFRSDFKLKALRDDLIHAFVVYFDIEFSKGDKPVCFSTGPKAKYTHWKQSIMYFEDHIKIQQGEIITGTMDCAPFDKNQRDLKIKLDFNFAGELMKSSSSLEYHMR</sequence>
<gene>
    <name type="primary">prmt1</name>
    <name type="ORF">DDB_G0291556</name>
</gene>
<comment type="function">
    <text evidence="3">Arginine methyltransferase that methylates the guanidino nitrogens of arginyl residues present in proteins such as ribonucleoproteins and histones.</text>
</comment>
<comment type="catalytic activity">
    <reaction evidence="3">
        <text>L-arginyl-[protein] + 2 S-adenosyl-L-methionine = N(omega),N(omega)-dimethyl-L-arginyl-[protein] + 2 S-adenosyl-L-homocysteine + 2 H(+)</text>
        <dbReference type="Rhea" id="RHEA:48096"/>
        <dbReference type="Rhea" id="RHEA-COMP:10532"/>
        <dbReference type="Rhea" id="RHEA-COMP:11991"/>
        <dbReference type="ChEBI" id="CHEBI:15378"/>
        <dbReference type="ChEBI" id="CHEBI:29965"/>
        <dbReference type="ChEBI" id="CHEBI:57856"/>
        <dbReference type="ChEBI" id="CHEBI:59789"/>
        <dbReference type="ChEBI" id="CHEBI:61897"/>
        <dbReference type="EC" id="2.1.1.319"/>
    </reaction>
</comment>
<comment type="catalytic activity">
    <reaction evidence="3">
        <text>L-arginyl-[protein] + S-adenosyl-L-methionine = N(omega)-methyl-L-arginyl-[protein] + S-adenosyl-L-homocysteine + H(+)</text>
        <dbReference type="Rhea" id="RHEA:48100"/>
        <dbReference type="Rhea" id="RHEA-COMP:10532"/>
        <dbReference type="Rhea" id="RHEA-COMP:11990"/>
        <dbReference type="ChEBI" id="CHEBI:15378"/>
        <dbReference type="ChEBI" id="CHEBI:29965"/>
        <dbReference type="ChEBI" id="CHEBI:57856"/>
        <dbReference type="ChEBI" id="CHEBI:59789"/>
        <dbReference type="ChEBI" id="CHEBI:65280"/>
    </reaction>
    <physiologicalReaction direction="left-to-right" evidence="3">
        <dbReference type="Rhea" id="RHEA:48101"/>
    </physiologicalReaction>
</comment>
<comment type="subcellular location">
    <subcellularLocation>
        <location evidence="1">Nucleus</location>
    </subcellularLocation>
    <subcellularLocation>
        <location evidence="1">Cytoplasm</location>
        <location evidence="1">Cytosol</location>
    </subcellularLocation>
</comment>
<comment type="similarity">
    <text evidence="4">Belongs to the class I-like SAM-binding methyltransferase superfamily. Protein arginine N-methyltransferase family.</text>
</comment>
<accession>Q54EF2</accession>
<protein>
    <recommendedName>
        <fullName>Protein arginine N-methyltransferase 1</fullName>
        <ecNumber evidence="3">2.1.1.319</ecNumber>
    </recommendedName>
    <alternativeName>
        <fullName>Histone-arginine N-methyltransferase PRMT1</fullName>
    </alternativeName>
</protein>